<sequence>MTVTDDYLANNVDYASGFKGPLPMPPSKHIAIVACMDARLDVYRMLGIKEGEAHVIRNAGCVVTDDVIRSLAISQRLLGTREIILLHHTDCGMLTFTDDDFKRAIQDETGIRPTWSPESYPDAVEDVRQSLRRIEVNPFVTKHTSLRGFVFDVATGKLNEVTP</sequence>
<evidence type="ECO:0000250" key="1">
    <source>
        <dbReference type="UniProtKB" id="P9WPJ7"/>
    </source>
</evidence>
<evidence type="ECO:0000305" key="2"/>
<keyword id="KW-0456">Lyase</keyword>
<keyword id="KW-0479">Metal-binding</keyword>
<keyword id="KW-1185">Reference proteome</keyword>
<keyword id="KW-0862">Zinc</keyword>
<accession>P64798</accession>
<accession>A0A1R3XXW3</accession>
<accession>Q10612</accession>
<accession>X2BHA3</accession>
<dbReference type="EC" id="4.2.1.1" evidence="1"/>
<dbReference type="EMBL" id="LT708304">
    <property type="protein sequence ID" value="SIT99918.1"/>
    <property type="molecule type" value="Genomic_DNA"/>
</dbReference>
<dbReference type="RefSeq" id="NP_854969.1">
    <property type="nucleotide sequence ID" value="NC_002945.3"/>
</dbReference>
<dbReference type="SMR" id="P64798"/>
<dbReference type="KEGG" id="mbo:BQ2027_MB1315"/>
<dbReference type="PATRIC" id="fig|233413.5.peg.1441"/>
<dbReference type="Proteomes" id="UP000001419">
    <property type="component" value="Chromosome"/>
</dbReference>
<dbReference type="GO" id="GO:0004089">
    <property type="term" value="F:carbonate dehydratase activity"/>
    <property type="evidence" value="ECO:0007669"/>
    <property type="project" value="InterPro"/>
</dbReference>
<dbReference type="GO" id="GO:0008270">
    <property type="term" value="F:zinc ion binding"/>
    <property type="evidence" value="ECO:0007669"/>
    <property type="project" value="InterPro"/>
</dbReference>
<dbReference type="CDD" id="cd03379">
    <property type="entry name" value="beta_CA_cladeD"/>
    <property type="match status" value="1"/>
</dbReference>
<dbReference type="FunFam" id="3.40.1050.10:FF:000011">
    <property type="entry name" value="Beta-carbonic anhydrase 1"/>
    <property type="match status" value="1"/>
</dbReference>
<dbReference type="Gene3D" id="3.40.1050.10">
    <property type="entry name" value="Carbonic anhydrase"/>
    <property type="match status" value="1"/>
</dbReference>
<dbReference type="InterPro" id="IPR001765">
    <property type="entry name" value="Carbonic_anhydrase"/>
</dbReference>
<dbReference type="InterPro" id="IPR036874">
    <property type="entry name" value="Carbonic_anhydrase_sf"/>
</dbReference>
<dbReference type="PANTHER" id="PTHR43175:SF3">
    <property type="entry name" value="CARBON DISULFIDE HYDROLASE"/>
    <property type="match status" value="1"/>
</dbReference>
<dbReference type="PANTHER" id="PTHR43175">
    <property type="entry name" value="CARBONIC ANHYDRASE"/>
    <property type="match status" value="1"/>
</dbReference>
<dbReference type="Pfam" id="PF00484">
    <property type="entry name" value="Pro_CA"/>
    <property type="match status" value="1"/>
</dbReference>
<dbReference type="SMART" id="SM00947">
    <property type="entry name" value="Pro_CA"/>
    <property type="match status" value="1"/>
</dbReference>
<dbReference type="SUPFAM" id="SSF53056">
    <property type="entry name" value="beta-carbonic anhydrase, cab"/>
    <property type="match status" value="1"/>
</dbReference>
<feature type="chain" id="PRO_0000103785" description="Beta-carbonic anhydrase 1">
    <location>
        <begin position="1"/>
        <end position="163"/>
    </location>
</feature>
<feature type="binding site" evidence="1">
    <location>
        <position position="35"/>
    </location>
    <ligand>
        <name>Zn(2+)</name>
        <dbReference type="ChEBI" id="CHEBI:29105"/>
    </ligand>
</feature>
<feature type="binding site" evidence="1">
    <location>
        <position position="37"/>
    </location>
    <ligand>
        <name>Zn(2+)</name>
        <dbReference type="ChEBI" id="CHEBI:29105"/>
    </ligand>
</feature>
<feature type="binding site" evidence="1">
    <location>
        <position position="88"/>
    </location>
    <ligand>
        <name>Zn(2+)</name>
        <dbReference type="ChEBI" id="CHEBI:29105"/>
    </ligand>
</feature>
<feature type="binding site" evidence="1">
    <location>
        <position position="91"/>
    </location>
    <ligand>
        <name>Zn(2+)</name>
        <dbReference type="ChEBI" id="CHEBI:29105"/>
    </ligand>
</feature>
<gene>
    <name type="ordered locus">BQ2027_MB1315</name>
</gene>
<reference key="1">
    <citation type="journal article" date="2003" name="Proc. Natl. Acad. Sci. U.S.A.">
        <title>The complete genome sequence of Mycobacterium bovis.</title>
        <authorList>
            <person name="Garnier T."/>
            <person name="Eiglmeier K."/>
            <person name="Camus J.-C."/>
            <person name="Medina N."/>
            <person name="Mansoor H."/>
            <person name="Pryor M."/>
            <person name="Duthoy S."/>
            <person name="Grondin S."/>
            <person name="Lacroix C."/>
            <person name="Monsempe C."/>
            <person name="Simon S."/>
            <person name="Harris B."/>
            <person name="Atkin R."/>
            <person name="Doggett J."/>
            <person name="Mayes R."/>
            <person name="Keating L."/>
            <person name="Wheeler P.R."/>
            <person name="Parkhill J."/>
            <person name="Barrell B.G."/>
            <person name="Cole S.T."/>
            <person name="Gordon S.V."/>
            <person name="Hewinson R.G."/>
        </authorList>
    </citation>
    <scope>NUCLEOTIDE SEQUENCE [LARGE SCALE GENOMIC DNA]</scope>
    <source>
        <strain>ATCC BAA-935 / AF2122/97</strain>
    </source>
</reference>
<reference key="2">
    <citation type="journal article" date="2017" name="Genome Announc.">
        <title>Updated reference genome sequence and annotation of Mycobacterium bovis AF2122/97.</title>
        <authorList>
            <person name="Malone K.M."/>
            <person name="Farrell D."/>
            <person name="Stuber T.P."/>
            <person name="Schubert O.T."/>
            <person name="Aebersold R."/>
            <person name="Robbe-Austerman S."/>
            <person name="Gordon S.V."/>
        </authorList>
    </citation>
    <scope>NUCLEOTIDE SEQUENCE [LARGE SCALE GENOMIC DNA]</scope>
    <scope>GENOME REANNOTATION</scope>
    <source>
        <strain>ATCC BAA-935 / AF2122/97</strain>
    </source>
</reference>
<protein>
    <recommendedName>
        <fullName evidence="2">Beta-carbonic anhydrase 1</fullName>
        <shortName evidence="2">Beta-CA 1</shortName>
        <ecNumber evidence="1">4.2.1.1</ecNumber>
    </recommendedName>
    <alternativeName>
        <fullName evidence="2">Carbonate dehydratase 1</fullName>
    </alternativeName>
    <alternativeName>
        <fullName evidence="2">mtCA 1</fullName>
    </alternativeName>
</protein>
<organism>
    <name type="scientific">Mycobacterium bovis (strain ATCC BAA-935 / AF2122/97)</name>
    <dbReference type="NCBI Taxonomy" id="233413"/>
    <lineage>
        <taxon>Bacteria</taxon>
        <taxon>Bacillati</taxon>
        <taxon>Actinomycetota</taxon>
        <taxon>Actinomycetes</taxon>
        <taxon>Mycobacteriales</taxon>
        <taxon>Mycobacteriaceae</taxon>
        <taxon>Mycobacterium</taxon>
        <taxon>Mycobacterium tuberculosis complex</taxon>
    </lineage>
</organism>
<proteinExistence type="inferred from homology"/>
<name>MTCA1_MYCBO</name>
<comment type="function">
    <text evidence="1">Catalyzes the reversible hydration of carbon dioxide to form bicarbonate.</text>
</comment>
<comment type="catalytic activity">
    <reaction evidence="1">
        <text>hydrogencarbonate + H(+) = CO2 + H2O</text>
        <dbReference type="Rhea" id="RHEA:10748"/>
        <dbReference type="ChEBI" id="CHEBI:15377"/>
        <dbReference type="ChEBI" id="CHEBI:15378"/>
        <dbReference type="ChEBI" id="CHEBI:16526"/>
        <dbReference type="ChEBI" id="CHEBI:17544"/>
        <dbReference type="EC" id="4.2.1.1"/>
    </reaction>
</comment>
<comment type="cofactor">
    <cofactor evidence="1">
        <name>Zn(2+)</name>
        <dbReference type="ChEBI" id="CHEBI:29105"/>
    </cofactor>
    <text evidence="1">Binds 1 zinc ion per subunit.</text>
</comment>
<comment type="subunit">
    <text evidence="1">Homotetramer.</text>
</comment>
<comment type="similarity">
    <text evidence="2">Belongs to the beta-class carbonic anhydrase family.</text>
</comment>